<feature type="chain" id="PRO_0000333280" description="ELMO domain-containing protein C">
    <location>
        <begin position="1"/>
        <end position="618"/>
    </location>
</feature>
<feature type="domain" description="ELMO" evidence="2">
    <location>
        <begin position="382"/>
        <end position="545"/>
    </location>
</feature>
<feature type="region of interest" description="Disordered" evidence="3">
    <location>
        <begin position="153"/>
        <end position="175"/>
    </location>
</feature>
<feature type="region of interest" description="Disordered" evidence="3">
    <location>
        <begin position="245"/>
        <end position="276"/>
    </location>
</feature>
<feature type="region of interest" description="Disordered" evidence="3">
    <location>
        <begin position="574"/>
        <end position="618"/>
    </location>
</feature>
<feature type="coiled-coil region" evidence="1">
    <location>
        <begin position="1"/>
        <end position="72"/>
    </location>
</feature>
<feature type="compositionally biased region" description="Low complexity" evidence="3">
    <location>
        <begin position="156"/>
        <end position="171"/>
    </location>
</feature>
<feature type="compositionally biased region" description="Low complexity" evidence="3">
    <location>
        <begin position="245"/>
        <end position="275"/>
    </location>
</feature>
<feature type="compositionally biased region" description="Low complexity" evidence="3">
    <location>
        <begin position="574"/>
        <end position="592"/>
    </location>
</feature>
<feature type="compositionally biased region" description="Low complexity" evidence="3">
    <location>
        <begin position="602"/>
        <end position="618"/>
    </location>
</feature>
<reference key="1">
    <citation type="journal article" date="2005" name="Nature">
        <title>The genome of the social amoeba Dictyostelium discoideum.</title>
        <authorList>
            <person name="Eichinger L."/>
            <person name="Pachebat J.A."/>
            <person name="Gloeckner G."/>
            <person name="Rajandream M.A."/>
            <person name="Sucgang R."/>
            <person name="Berriman M."/>
            <person name="Song J."/>
            <person name="Olsen R."/>
            <person name="Szafranski K."/>
            <person name="Xu Q."/>
            <person name="Tunggal B."/>
            <person name="Kummerfeld S."/>
            <person name="Madera M."/>
            <person name="Konfortov B.A."/>
            <person name="Rivero F."/>
            <person name="Bankier A.T."/>
            <person name="Lehmann R."/>
            <person name="Hamlin N."/>
            <person name="Davies R."/>
            <person name="Gaudet P."/>
            <person name="Fey P."/>
            <person name="Pilcher K."/>
            <person name="Chen G."/>
            <person name="Saunders D."/>
            <person name="Sodergren E.J."/>
            <person name="Davis P."/>
            <person name="Kerhornou A."/>
            <person name="Nie X."/>
            <person name="Hall N."/>
            <person name="Anjard C."/>
            <person name="Hemphill L."/>
            <person name="Bason N."/>
            <person name="Farbrother P."/>
            <person name="Desany B."/>
            <person name="Just E."/>
            <person name="Morio T."/>
            <person name="Rost R."/>
            <person name="Churcher C.M."/>
            <person name="Cooper J."/>
            <person name="Haydock S."/>
            <person name="van Driessche N."/>
            <person name="Cronin A."/>
            <person name="Goodhead I."/>
            <person name="Muzny D.M."/>
            <person name="Mourier T."/>
            <person name="Pain A."/>
            <person name="Lu M."/>
            <person name="Harper D."/>
            <person name="Lindsay R."/>
            <person name="Hauser H."/>
            <person name="James K.D."/>
            <person name="Quiles M."/>
            <person name="Madan Babu M."/>
            <person name="Saito T."/>
            <person name="Buchrieser C."/>
            <person name="Wardroper A."/>
            <person name="Felder M."/>
            <person name="Thangavelu M."/>
            <person name="Johnson D."/>
            <person name="Knights A."/>
            <person name="Loulseged H."/>
            <person name="Mungall K.L."/>
            <person name="Oliver K."/>
            <person name="Price C."/>
            <person name="Quail M.A."/>
            <person name="Urushihara H."/>
            <person name="Hernandez J."/>
            <person name="Rabbinowitsch E."/>
            <person name="Steffen D."/>
            <person name="Sanders M."/>
            <person name="Ma J."/>
            <person name="Kohara Y."/>
            <person name="Sharp S."/>
            <person name="Simmonds M.N."/>
            <person name="Spiegler S."/>
            <person name="Tivey A."/>
            <person name="Sugano S."/>
            <person name="White B."/>
            <person name="Walker D."/>
            <person name="Woodward J.R."/>
            <person name="Winckler T."/>
            <person name="Tanaka Y."/>
            <person name="Shaulsky G."/>
            <person name="Schleicher M."/>
            <person name="Weinstock G.M."/>
            <person name="Rosenthal A."/>
            <person name="Cox E.C."/>
            <person name="Chisholm R.L."/>
            <person name="Gibbs R.A."/>
            <person name="Loomis W.F."/>
            <person name="Platzer M."/>
            <person name="Kay R.R."/>
            <person name="Williams J.G."/>
            <person name="Dear P.H."/>
            <person name="Noegel A.A."/>
            <person name="Barrell B.G."/>
            <person name="Kuspa A."/>
        </authorList>
    </citation>
    <scope>NUCLEOTIDE SEQUENCE [LARGE SCALE GENOMIC DNA]</scope>
    <source>
        <strain>AX4</strain>
    </source>
</reference>
<protein>
    <recommendedName>
        <fullName>ELMO domain-containing protein C</fullName>
    </recommendedName>
</protein>
<proteinExistence type="predicted"/>
<keyword id="KW-0175">Coiled coil</keyword>
<keyword id="KW-1185">Reference proteome</keyword>
<sequence length="618" mass="72102">MERYRIRRERKEILKNEIEKQRDLIQKEDFRLMSNENNEHNDEHDNRLIELNKQLNILKLELEELRLQGDRFYVLNGDDTILMDIDETSKITFYLCRHFTDLTKIPIEESNESRILIVNELETVSDPSIEPIFEFQKVISSKSIHQLFSVKTNFDNNNNNNNNSNNNNNGNKPSLFERVKQNTWSLGISPLRRTTSDPTIFGERFSPPKSISNFIERFKDNKEKDKEKDNSSLSITIQNNNTATTTTTTTTTTTTTTTTTTTTTTTTTTPTSSTTVNTNINQEKLRKYSTTPSINQINNQQNIENNNNNNNNNQEIGGKILLTWSNKETSMYILKTQEESLELLELLGSHIDRSKKVTAKQSQTIKILFQKKSTIYESTNPDHEEYLKHLWSLLYPEQEFQKKSPLWKKFGFQSDDPTRDFRGMGIMGLLNLIHLVQHHNDWVQEILAQDRDYPFAVAGINISNLIFEVFQISEDSLQQPWYSSFWSSSYMAMLCSMSRHNDHAFEELYFLIFNLLDHLWIQMNATYMMFPLVIKKLKSQLNEISNFNPNSFDEVRARFDLIQRLNIIDNPIDQQQQQLQQQQQSLPLPSSPRSFLNNYQQTTTSSTSISPSKNTQNN</sequence>
<name>ELMOC_DICDI</name>
<gene>
    <name type="primary">elmoC</name>
    <name type="ORF">DDB_G0282949</name>
</gene>
<evidence type="ECO:0000255" key="1"/>
<evidence type="ECO:0000255" key="2">
    <source>
        <dbReference type="PROSITE-ProRule" id="PRU00664"/>
    </source>
</evidence>
<evidence type="ECO:0000256" key="3">
    <source>
        <dbReference type="SAM" id="MobiDB-lite"/>
    </source>
</evidence>
<dbReference type="EMBL" id="AAFI02000049">
    <property type="protein sequence ID" value="EAL65918.1"/>
    <property type="molecule type" value="Genomic_DNA"/>
</dbReference>
<dbReference type="RefSeq" id="XP_639274.1">
    <property type="nucleotide sequence ID" value="XM_634182.1"/>
</dbReference>
<dbReference type="SMR" id="Q54RS7"/>
<dbReference type="FunCoup" id="Q54RS7">
    <property type="interactions" value="456"/>
</dbReference>
<dbReference type="STRING" id="44689.Q54RS7"/>
<dbReference type="PaxDb" id="44689-DDB0233904"/>
<dbReference type="EnsemblProtists" id="EAL65918">
    <property type="protein sequence ID" value="EAL65918"/>
    <property type="gene ID" value="DDB_G0282949"/>
</dbReference>
<dbReference type="GeneID" id="8623842"/>
<dbReference type="KEGG" id="ddi:DDB_G0282949"/>
<dbReference type="dictyBase" id="DDB_G0282949">
    <property type="gene designation" value="elmoC"/>
</dbReference>
<dbReference type="VEuPathDB" id="AmoebaDB:DDB_G0282949"/>
<dbReference type="eggNOG" id="KOG2998">
    <property type="taxonomic scope" value="Eukaryota"/>
</dbReference>
<dbReference type="HOGENOM" id="CLU_442413_0_0_1"/>
<dbReference type="InParanoid" id="Q54RS7"/>
<dbReference type="OMA" id="NTWSLGI"/>
<dbReference type="Reactome" id="R-DDI-8849471">
    <property type="pathway name" value="PTK6 Regulates RHO GTPases, RAS GTPase and MAP kinases"/>
</dbReference>
<dbReference type="PRO" id="PR:Q54RS7"/>
<dbReference type="Proteomes" id="UP000002195">
    <property type="component" value="Chromosome 4"/>
</dbReference>
<dbReference type="GO" id="GO:0005886">
    <property type="term" value="C:plasma membrane"/>
    <property type="evidence" value="ECO:0000318"/>
    <property type="project" value="GO_Central"/>
</dbReference>
<dbReference type="GO" id="GO:0007015">
    <property type="term" value="P:actin filament organization"/>
    <property type="evidence" value="ECO:0000318"/>
    <property type="project" value="GO_Central"/>
</dbReference>
<dbReference type="GO" id="GO:0048870">
    <property type="term" value="P:cell motility"/>
    <property type="evidence" value="ECO:0000318"/>
    <property type="project" value="GO_Central"/>
</dbReference>
<dbReference type="InterPro" id="IPR006816">
    <property type="entry name" value="ELMO_dom"/>
</dbReference>
<dbReference type="InterPro" id="IPR050868">
    <property type="entry name" value="ELMO_domain-containing"/>
</dbReference>
<dbReference type="PANTHER" id="PTHR12771:SF41">
    <property type="entry name" value="ELMO DOMAIN-CONTAINING PROTEIN C"/>
    <property type="match status" value="1"/>
</dbReference>
<dbReference type="PANTHER" id="PTHR12771">
    <property type="entry name" value="ENGULFMENT AND CELL MOTILITY"/>
    <property type="match status" value="1"/>
</dbReference>
<dbReference type="Pfam" id="PF04727">
    <property type="entry name" value="ELMO_CED12"/>
    <property type="match status" value="1"/>
</dbReference>
<dbReference type="PROSITE" id="PS51335">
    <property type="entry name" value="ELMO"/>
    <property type="match status" value="1"/>
</dbReference>
<organism>
    <name type="scientific">Dictyostelium discoideum</name>
    <name type="common">Social amoeba</name>
    <dbReference type="NCBI Taxonomy" id="44689"/>
    <lineage>
        <taxon>Eukaryota</taxon>
        <taxon>Amoebozoa</taxon>
        <taxon>Evosea</taxon>
        <taxon>Eumycetozoa</taxon>
        <taxon>Dictyostelia</taxon>
        <taxon>Dictyosteliales</taxon>
        <taxon>Dictyosteliaceae</taxon>
        <taxon>Dictyostelium</taxon>
    </lineage>
</organism>
<accession>Q54RS7</accession>